<sequence length="352" mass="38861">MSESELLGPRAYGEACGQALLKACAEDFQVDEVLDIPLSGQGEHLWLWVEKRGLNTEEAARRLARAAGMPLKAISYAGLKDRQALTRQWFSLHLPGKADPDLVAAEDDSLRILERVRHSRKLQRGAHAANGFKLRLTRLAADRPALDARLEQLRRQGVPNYFGLQRFGHDGGNLAEARAFAVRRELPAQRNLRSRLLSAARSYLFNRVLAERVAVGDWNRAQPGDLLAFTDSRSFFPAGVEECADPRLALLDLHPTGPLWGAGGSPAGAATKVLEDAVGRCEAPLGDWLGEAGMLHERRILRLPIDRLAWHYPAIDILQLEFVLPAGCFATVVVRELVDLWPAGLMDTSCVF</sequence>
<reference key="1">
    <citation type="journal article" date="2009" name="J. Bacteriol.">
        <title>Genome sequence of Azotobacter vinelandii, an obligate aerobe specialized to support diverse anaerobic metabolic processes.</title>
        <authorList>
            <person name="Setubal J.C."/>
            <person name="Dos Santos P."/>
            <person name="Goldman B.S."/>
            <person name="Ertesvaag H."/>
            <person name="Espin G."/>
            <person name="Rubio L.M."/>
            <person name="Valla S."/>
            <person name="Almeida N.F."/>
            <person name="Balasubramanian D."/>
            <person name="Cromes L."/>
            <person name="Curatti L."/>
            <person name="Du Z."/>
            <person name="Godsy E."/>
            <person name="Goodner B."/>
            <person name="Hellner-Burris K."/>
            <person name="Hernandez J.A."/>
            <person name="Houmiel K."/>
            <person name="Imperial J."/>
            <person name="Kennedy C."/>
            <person name="Larson T.J."/>
            <person name="Latreille P."/>
            <person name="Ligon L.S."/>
            <person name="Lu J."/>
            <person name="Maerk M."/>
            <person name="Miller N.M."/>
            <person name="Norton S."/>
            <person name="O'Carroll I.P."/>
            <person name="Paulsen I."/>
            <person name="Raulfs E.C."/>
            <person name="Roemer R."/>
            <person name="Rosser J."/>
            <person name="Segura D."/>
            <person name="Slater S."/>
            <person name="Stricklin S.L."/>
            <person name="Studholme D.J."/>
            <person name="Sun J."/>
            <person name="Viana C.J."/>
            <person name="Wallin E."/>
            <person name="Wang B."/>
            <person name="Wheeler C."/>
            <person name="Zhu H."/>
            <person name="Dean D.R."/>
            <person name="Dixon R."/>
            <person name="Wood D."/>
        </authorList>
    </citation>
    <scope>NUCLEOTIDE SEQUENCE [LARGE SCALE GENOMIC DNA]</scope>
    <source>
        <strain>DJ / ATCC BAA-1303</strain>
    </source>
</reference>
<organism>
    <name type="scientific">Azotobacter vinelandii (strain DJ / ATCC BAA-1303)</name>
    <dbReference type="NCBI Taxonomy" id="322710"/>
    <lineage>
        <taxon>Bacteria</taxon>
        <taxon>Pseudomonadati</taxon>
        <taxon>Pseudomonadota</taxon>
        <taxon>Gammaproteobacteria</taxon>
        <taxon>Pseudomonadales</taxon>
        <taxon>Pseudomonadaceae</taxon>
        <taxon>Azotobacter</taxon>
    </lineage>
</organism>
<accession>C1DSR9</accession>
<protein>
    <recommendedName>
        <fullName evidence="1">tRNA pseudouridine synthase D</fullName>
        <ecNumber evidence="1">5.4.99.27</ecNumber>
    </recommendedName>
    <alternativeName>
        <fullName evidence="1">tRNA pseudouridine(13) synthase</fullName>
    </alternativeName>
    <alternativeName>
        <fullName evidence="1">tRNA pseudouridylate synthase D</fullName>
    </alternativeName>
    <alternativeName>
        <fullName evidence="1">tRNA-uridine isomerase D</fullName>
    </alternativeName>
</protein>
<evidence type="ECO:0000255" key="1">
    <source>
        <dbReference type="HAMAP-Rule" id="MF_01082"/>
    </source>
</evidence>
<comment type="function">
    <text evidence="1">Responsible for synthesis of pseudouridine from uracil-13 in transfer RNAs.</text>
</comment>
<comment type="catalytic activity">
    <reaction evidence="1">
        <text>uridine(13) in tRNA = pseudouridine(13) in tRNA</text>
        <dbReference type="Rhea" id="RHEA:42540"/>
        <dbReference type="Rhea" id="RHEA-COMP:10105"/>
        <dbReference type="Rhea" id="RHEA-COMP:10106"/>
        <dbReference type="ChEBI" id="CHEBI:65314"/>
        <dbReference type="ChEBI" id="CHEBI:65315"/>
        <dbReference type="EC" id="5.4.99.27"/>
    </reaction>
</comment>
<comment type="similarity">
    <text evidence="1">Belongs to the pseudouridine synthase TruD family.</text>
</comment>
<proteinExistence type="inferred from homology"/>
<gene>
    <name evidence="1" type="primary">truD</name>
    <name type="ordered locus">Avin_38720</name>
</gene>
<dbReference type="EC" id="5.4.99.27" evidence="1"/>
<dbReference type="EMBL" id="CP001157">
    <property type="protein sequence ID" value="ACO80012.1"/>
    <property type="molecule type" value="Genomic_DNA"/>
</dbReference>
<dbReference type="RefSeq" id="WP_012702387.1">
    <property type="nucleotide sequence ID" value="NC_012560.1"/>
</dbReference>
<dbReference type="SMR" id="C1DSR9"/>
<dbReference type="STRING" id="322710.Avin_38720"/>
<dbReference type="EnsemblBacteria" id="ACO80012">
    <property type="protein sequence ID" value="ACO80012"/>
    <property type="gene ID" value="Avin_38720"/>
</dbReference>
<dbReference type="GeneID" id="88186831"/>
<dbReference type="KEGG" id="avn:Avin_38720"/>
<dbReference type="eggNOG" id="COG0585">
    <property type="taxonomic scope" value="Bacteria"/>
</dbReference>
<dbReference type="HOGENOM" id="CLU_005281_4_0_6"/>
<dbReference type="OrthoDB" id="1550679at2"/>
<dbReference type="Proteomes" id="UP000002424">
    <property type="component" value="Chromosome"/>
</dbReference>
<dbReference type="GO" id="GO:0005829">
    <property type="term" value="C:cytosol"/>
    <property type="evidence" value="ECO:0007669"/>
    <property type="project" value="TreeGrafter"/>
</dbReference>
<dbReference type="GO" id="GO:0003723">
    <property type="term" value="F:RNA binding"/>
    <property type="evidence" value="ECO:0007669"/>
    <property type="project" value="InterPro"/>
</dbReference>
<dbReference type="GO" id="GO:0160150">
    <property type="term" value="F:tRNA pseudouridine(13) synthase activity"/>
    <property type="evidence" value="ECO:0007669"/>
    <property type="project" value="UniProtKB-EC"/>
</dbReference>
<dbReference type="GO" id="GO:0031119">
    <property type="term" value="P:tRNA pseudouridine synthesis"/>
    <property type="evidence" value="ECO:0007669"/>
    <property type="project" value="UniProtKB-UniRule"/>
</dbReference>
<dbReference type="CDD" id="cd02575">
    <property type="entry name" value="PseudoU_synth_EcTruD"/>
    <property type="match status" value="1"/>
</dbReference>
<dbReference type="Gene3D" id="3.30.2350.20">
    <property type="entry name" value="TruD, catalytic domain"/>
    <property type="match status" value="1"/>
</dbReference>
<dbReference type="Gene3D" id="3.30.2340.10">
    <property type="entry name" value="TruD, insertion domain"/>
    <property type="match status" value="1"/>
</dbReference>
<dbReference type="HAMAP" id="MF_01082">
    <property type="entry name" value="TruD"/>
    <property type="match status" value="1"/>
</dbReference>
<dbReference type="InterPro" id="IPR020103">
    <property type="entry name" value="PsdUridine_synth_cat_dom_sf"/>
</dbReference>
<dbReference type="InterPro" id="IPR001656">
    <property type="entry name" value="PsdUridine_synth_TruD"/>
</dbReference>
<dbReference type="InterPro" id="IPR020119">
    <property type="entry name" value="PsdUridine_synth_TruD_CS"/>
</dbReference>
<dbReference type="InterPro" id="IPR011760">
    <property type="entry name" value="PsdUridine_synth_TruD_insert"/>
</dbReference>
<dbReference type="InterPro" id="IPR042214">
    <property type="entry name" value="TruD_catalytic"/>
</dbReference>
<dbReference type="InterPro" id="IPR043165">
    <property type="entry name" value="TruD_insert_sf"/>
</dbReference>
<dbReference type="InterPro" id="IPR050170">
    <property type="entry name" value="TruD_pseudoU_synthase"/>
</dbReference>
<dbReference type="NCBIfam" id="NF002153">
    <property type="entry name" value="PRK00984.1-2"/>
    <property type="match status" value="1"/>
</dbReference>
<dbReference type="PANTHER" id="PTHR47811">
    <property type="entry name" value="TRNA PSEUDOURIDINE SYNTHASE D"/>
    <property type="match status" value="1"/>
</dbReference>
<dbReference type="PANTHER" id="PTHR47811:SF1">
    <property type="entry name" value="TRNA PSEUDOURIDINE SYNTHASE D"/>
    <property type="match status" value="1"/>
</dbReference>
<dbReference type="Pfam" id="PF01142">
    <property type="entry name" value="TruD"/>
    <property type="match status" value="2"/>
</dbReference>
<dbReference type="SUPFAM" id="SSF55120">
    <property type="entry name" value="Pseudouridine synthase"/>
    <property type="match status" value="1"/>
</dbReference>
<dbReference type="PROSITE" id="PS50984">
    <property type="entry name" value="TRUD"/>
    <property type="match status" value="1"/>
</dbReference>
<dbReference type="PROSITE" id="PS01268">
    <property type="entry name" value="UPF0024"/>
    <property type="match status" value="1"/>
</dbReference>
<keyword id="KW-0413">Isomerase</keyword>
<keyword id="KW-0819">tRNA processing</keyword>
<feature type="chain" id="PRO_1000213511" description="tRNA pseudouridine synthase D">
    <location>
        <begin position="1"/>
        <end position="352"/>
    </location>
</feature>
<feature type="domain" description="TRUD" evidence="1">
    <location>
        <begin position="157"/>
        <end position="303"/>
    </location>
</feature>
<feature type="active site" description="Nucleophile" evidence="1">
    <location>
        <position position="81"/>
    </location>
</feature>
<name>TRUD_AZOVD</name>